<protein>
    <recommendedName>
        <fullName>Alliin lyase 1</fullName>
        <shortName>Alliinase-1</shortName>
        <ecNumber evidence="3">4.4.1.4</ecNumber>
    </recommendedName>
    <alternativeName>
        <fullName>Cysteine sulphoxide lyase 1</fullName>
    </alternativeName>
</protein>
<proteinExistence type="evidence at protein level"/>
<feature type="signal peptide" evidence="1">
    <location>
        <begin position="1"/>
        <end position="28"/>
    </location>
</feature>
<feature type="propeptide" id="PRO_0000020677" evidence="5">
    <location>
        <begin position="29"/>
        <end position="38"/>
    </location>
</feature>
<feature type="chain" id="PRO_0000020678" description="Alliin lyase 1">
    <location>
        <begin position="39"/>
        <end position="486"/>
    </location>
</feature>
<feature type="domain" description="EGF-like; atypical">
    <location>
        <begin position="51"/>
        <end position="97"/>
    </location>
</feature>
<feature type="binding site" evidence="4 8">
    <location>
        <begin position="130"/>
        <end position="138"/>
    </location>
    <ligand>
        <name>chloride</name>
        <dbReference type="ChEBI" id="CHEBI:17996"/>
    </ligand>
</feature>
<feature type="modified residue" description="N6-(pyridoxal phosphate)lysine" evidence="4 8">
    <location>
        <position position="289"/>
    </location>
</feature>
<feature type="glycosylation site" description="N-linked (GlcNAc...) asparagine" evidence="2">
    <location>
        <position position="57"/>
    </location>
</feature>
<feature type="glycosylation site" description="N-linked (GlcNAc...) asparagine" evidence="2 4 6 8 10">
    <location>
        <position position="184"/>
    </location>
</feature>
<feature type="glycosylation site" description="N-linked (GlcNAc...) asparagine" evidence="2 6 10">
    <location>
        <position position="229"/>
    </location>
</feature>
<feature type="glycosylation site" description="N-linked (GlcNAc...) asparagine" evidence="2 4 6 8 10">
    <location>
        <position position="366"/>
    </location>
</feature>
<feature type="disulfide bond" evidence="4 6 8 10">
    <location>
        <begin position="58"/>
        <end position="77"/>
    </location>
</feature>
<feature type="disulfide bond" evidence="4 6 8 10">
    <location>
        <begin position="79"/>
        <end position="88"/>
    </location>
</feature>
<feature type="disulfide bond" evidence="4 6 8 10">
    <location>
        <begin position="82"/>
        <end position="95"/>
    </location>
</feature>
<feature type="disulfide bond" evidence="4 6 8 10">
    <location>
        <begin position="406"/>
        <end position="414"/>
    </location>
</feature>
<feature type="helix" evidence="12">
    <location>
        <begin position="44"/>
        <end position="54"/>
    </location>
</feature>
<feature type="helix" evidence="12">
    <location>
        <begin position="59"/>
        <end position="61"/>
    </location>
</feature>
<feature type="strand" evidence="12">
    <location>
        <begin position="83"/>
        <end position="85"/>
    </location>
</feature>
<feature type="helix" evidence="12">
    <location>
        <begin position="105"/>
        <end position="107"/>
    </location>
</feature>
<feature type="helix" evidence="12">
    <location>
        <begin position="108"/>
        <end position="111"/>
    </location>
</feature>
<feature type="helix" evidence="12">
    <location>
        <begin position="115"/>
        <end position="118"/>
    </location>
</feature>
<feature type="strand" evidence="12">
    <location>
        <begin position="120"/>
        <end position="122"/>
    </location>
</feature>
<feature type="turn" evidence="12">
    <location>
        <begin position="124"/>
        <end position="127"/>
    </location>
</feature>
<feature type="strand" evidence="12">
    <location>
        <begin position="129"/>
        <end position="131"/>
    </location>
</feature>
<feature type="helix" evidence="12">
    <location>
        <begin position="141"/>
        <end position="154"/>
    </location>
</feature>
<feature type="strand" evidence="12">
    <location>
        <begin position="163"/>
        <end position="168"/>
    </location>
</feature>
<feature type="helix" evidence="12">
    <location>
        <begin position="169"/>
        <end position="181"/>
    </location>
</feature>
<feature type="turn" evidence="12">
    <location>
        <begin position="185"/>
        <end position="187"/>
    </location>
</feature>
<feature type="strand" evidence="12">
    <location>
        <begin position="194"/>
        <end position="198"/>
    </location>
</feature>
<feature type="helix" evidence="12">
    <location>
        <begin position="204"/>
        <end position="212"/>
    </location>
</feature>
<feature type="strand" evidence="12">
    <location>
        <begin position="218"/>
        <end position="223"/>
    </location>
</feature>
<feature type="helix" evidence="12">
    <location>
        <begin position="224"/>
        <end position="227"/>
    </location>
</feature>
<feature type="helix" evidence="12">
    <location>
        <begin position="233"/>
        <end position="235"/>
    </location>
</feature>
<feature type="strand" evidence="12">
    <location>
        <begin position="236"/>
        <end position="243"/>
    </location>
</feature>
<feature type="turn" evidence="12">
    <location>
        <begin position="245"/>
        <end position="247"/>
    </location>
</feature>
<feature type="strand" evidence="12">
    <location>
        <begin position="259"/>
        <end position="263"/>
    </location>
</feature>
<feature type="turn" evidence="12">
    <location>
        <begin position="269"/>
        <end position="271"/>
    </location>
</feature>
<feature type="strand" evidence="12">
    <location>
        <begin position="281"/>
        <end position="286"/>
    </location>
</feature>
<feature type="helix" evidence="12">
    <location>
        <begin position="287"/>
        <end position="290"/>
    </location>
</feature>
<feature type="helix" evidence="12">
    <location>
        <begin position="294"/>
        <end position="296"/>
    </location>
</feature>
<feature type="strand" evidence="12">
    <location>
        <begin position="299"/>
        <end position="303"/>
    </location>
</feature>
<feature type="helix" evidence="12">
    <location>
        <begin position="306"/>
        <end position="319"/>
    </location>
</feature>
<feature type="strand" evidence="11">
    <location>
        <begin position="320"/>
        <end position="322"/>
    </location>
</feature>
<feature type="helix" evidence="12">
    <location>
        <begin position="325"/>
        <end position="345"/>
    </location>
</feature>
<feature type="helix" evidence="12">
    <location>
        <begin position="352"/>
        <end position="371"/>
    </location>
</feature>
<feature type="strand" evidence="12">
    <location>
        <begin position="374"/>
        <end position="378"/>
    </location>
</feature>
<feature type="strand" evidence="12">
    <location>
        <begin position="386"/>
        <end position="388"/>
    </location>
</feature>
<feature type="turn" evidence="12">
    <location>
        <begin position="389"/>
        <end position="392"/>
    </location>
</feature>
<feature type="strand" evidence="12">
    <location>
        <begin position="393"/>
        <end position="395"/>
    </location>
</feature>
<feature type="strand" evidence="12">
    <location>
        <begin position="400"/>
        <end position="406"/>
    </location>
</feature>
<feature type="helix" evidence="12">
    <location>
        <begin position="409"/>
        <end position="411"/>
    </location>
</feature>
<feature type="helix" evidence="12">
    <location>
        <begin position="414"/>
        <end position="420"/>
    </location>
</feature>
<feature type="helix" evidence="12">
    <location>
        <begin position="428"/>
        <end position="431"/>
    </location>
</feature>
<feature type="strand" evidence="12">
    <location>
        <begin position="437"/>
        <end position="441"/>
    </location>
</feature>
<feature type="helix" evidence="12">
    <location>
        <begin position="446"/>
        <end position="460"/>
    </location>
</feature>
<accession>Q01594</accession>
<sequence length="486" mass="55639">MVESYKKIGSCNKMPCLVILTCIIMSNSLVNNNNMVQAKMTWTMKAAEEAEAVANINCSEHGRAFLDGIISEGSPKCECNTCYTGPDCSEKIQGCSADVASGDGLFLEEYWKQHKEASAVLVSPWHRMSYFFNPVSNFISFELEKTIKELHEVVGNAAAKDRYIVFGVGVTQLIHGLVISLSPNMTATPDAPESKVVAHAPFYPVFREQTKYFNKKGYVWAGNAANYVNVSNPEQYIEMVTSPNNPEGLLRHAVIKGCKSIYDMVYYWPHYTPIKYKADEDILLFTMSKFTGHSGSRFGWALIKDESVYNNLLNYMTKNTEGTPRETQLRSLKVLKEVVAMVKTQKGTMRDLNTFGFKKLRERWVNITALLDQSDRFSYQELPQSEYCNYFRRMRPPSPSYAWVKCEWEEDKDCYQTFQNGRINTQNGVGFEASSRYVRLSLIKTQDDFDQLMYYLKDMVKAKRKTPLIKQLFIDQTETASRRPFI</sequence>
<keyword id="KW-0002">3D-structure</keyword>
<keyword id="KW-0868">Chloride</keyword>
<keyword id="KW-0903">Direct protein sequencing</keyword>
<keyword id="KW-1015">Disulfide bond</keyword>
<keyword id="KW-0245">EGF-like domain</keyword>
<keyword id="KW-0325">Glycoprotein</keyword>
<keyword id="KW-0456">Lyase</keyword>
<keyword id="KW-0663">Pyridoxal phosphate</keyword>
<keyword id="KW-0704">Schiff base</keyword>
<keyword id="KW-0732">Signal</keyword>
<keyword id="KW-0926">Vacuole</keyword>
<name>ALLN1_ALLSA</name>
<organism>
    <name type="scientific">Allium sativum</name>
    <name type="common">Garlic</name>
    <dbReference type="NCBI Taxonomy" id="4682"/>
    <lineage>
        <taxon>Eukaryota</taxon>
        <taxon>Viridiplantae</taxon>
        <taxon>Streptophyta</taxon>
        <taxon>Embryophyta</taxon>
        <taxon>Tracheophyta</taxon>
        <taxon>Spermatophyta</taxon>
        <taxon>Magnoliopsida</taxon>
        <taxon>Liliopsida</taxon>
        <taxon>Asparagales</taxon>
        <taxon>Amaryllidaceae</taxon>
        <taxon>Allioideae</taxon>
        <taxon>Allieae</taxon>
        <taxon>Allium</taxon>
    </lineage>
</organism>
<comment type="function">
    <text>Able to cleave the C-S bond of sulfoxide derivatives of Cys to produce allicin, thus giving rise to all sulfur compounds which are responsible for most of the properties of garlic, such as the specific smell and flavor as well as the health benefits like blood lipid or blood pressure lowering.</text>
</comment>
<comment type="catalytic activity">
    <reaction evidence="3">
        <text>an S-alkyl-L-cysteine S-oxide = an S-alkyl sulfenate + 2-aminoprop-2-enoate</text>
        <dbReference type="Rhea" id="RHEA:20141"/>
        <dbReference type="ChEBI" id="CHEBI:22326"/>
        <dbReference type="ChEBI" id="CHEBI:76565"/>
        <dbReference type="ChEBI" id="CHEBI:142409"/>
        <dbReference type="EC" id="4.4.1.4"/>
    </reaction>
</comment>
<comment type="cofactor">
    <cofactor evidence="4 6">
        <name>pyridoxal 5'-phosphate</name>
        <dbReference type="ChEBI" id="CHEBI:597326"/>
    </cofactor>
</comment>
<comment type="subunit">
    <text evidence="3 4 6">Homodimer.</text>
</comment>
<comment type="subcellular location">
    <subcellularLocation>
        <location>Vacuole</location>
    </subcellularLocation>
</comment>
<comment type="tissue specificity">
    <text evidence="3 4 6">Expressed in bulb (at protein level) (PubMed:12136147, PubMed:12235163, PubMed:17174334). Expressed in shoots.</text>
</comment>
<comment type="domain">
    <text>The 6 Cys residues of the EGF-like domain are arranged in a disulfide pattern different from the one found in the canonical EGFs. The function of this domain is unclear. It may be a binding site for other proteins or the docking site for a putative alliinase receptor.</text>
</comment>
<comment type="similarity">
    <text evidence="7">Belongs to the alliinase family.</text>
</comment>
<comment type="online information" name="Protein Spotlight">
    <link uri="https://www.proteinspotlight.org/back_issues/039"/>
    <text>What's that smell? - Issue 39 of October 2003</text>
</comment>
<evidence type="ECO:0000255" key="1"/>
<evidence type="ECO:0000255" key="2">
    <source>
        <dbReference type="PROSITE-ProRule" id="PRU00498"/>
    </source>
</evidence>
<evidence type="ECO:0000269" key="3">
    <source>
    </source>
</evidence>
<evidence type="ECO:0000269" key="4">
    <source>
    </source>
</evidence>
<evidence type="ECO:0000269" key="5">
    <source>
    </source>
</evidence>
<evidence type="ECO:0000269" key="6">
    <source>
    </source>
</evidence>
<evidence type="ECO:0000305" key="7"/>
<evidence type="ECO:0007744" key="8">
    <source>
        <dbReference type="PDB" id="1LK9"/>
    </source>
</evidence>
<evidence type="ECO:0007744" key="9">
    <source>
        <dbReference type="PDB" id="2HOR"/>
    </source>
</evidence>
<evidence type="ECO:0007744" key="10">
    <source>
        <dbReference type="PDB" id="2HOX"/>
    </source>
</evidence>
<evidence type="ECO:0007829" key="11">
    <source>
        <dbReference type="PDB" id="1LK9"/>
    </source>
</evidence>
<evidence type="ECO:0007829" key="12">
    <source>
        <dbReference type="PDB" id="2HOX"/>
    </source>
</evidence>
<dbReference type="EC" id="4.4.1.4" evidence="3"/>
<dbReference type="EMBL" id="Z12622">
    <property type="protein sequence ID" value="CAA78268.1"/>
    <property type="molecule type" value="mRNA"/>
</dbReference>
<dbReference type="PIR" id="S29302">
    <property type="entry name" value="S29302"/>
</dbReference>
<dbReference type="PDB" id="1LK9">
    <property type="method" value="X-ray"/>
    <property type="resolution" value="1.53 A"/>
    <property type="chains" value="A/B=39-486"/>
</dbReference>
<dbReference type="PDB" id="2HOR">
    <property type="method" value="X-ray"/>
    <property type="resolution" value="1.60 A"/>
    <property type="chains" value="A=39-465"/>
</dbReference>
<dbReference type="PDB" id="2HOX">
    <property type="method" value="X-ray"/>
    <property type="resolution" value="1.40 A"/>
    <property type="chains" value="A/B/C/D=39-465"/>
</dbReference>
<dbReference type="PDBsum" id="1LK9"/>
<dbReference type="PDBsum" id="2HOR"/>
<dbReference type="PDBsum" id="2HOX"/>
<dbReference type="SMR" id="Q01594"/>
<dbReference type="Allergome" id="843">
    <property type="allergen name" value="All s Alliin lyase"/>
</dbReference>
<dbReference type="iPTMnet" id="Q01594"/>
<dbReference type="BioCyc" id="MetaCyc:MONOMER-13504"/>
<dbReference type="EvolutionaryTrace" id="Q01594"/>
<dbReference type="GO" id="GO:0005773">
    <property type="term" value="C:vacuole"/>
    <property type="evidence" value="ECO:0007669"/>
    <property type="project" value="UniProtKB-SubCell"/>
</dbReference>
<dbReference type="GO" id="GO:0047654">
    <property type="term" value="F:alliin lyase activity"/>
    <property type="evidence" value="ECO:0000314"/>
    <property type="project" value="UniProtKB"/>
</dbReference>
<dbReference type="GO" id="GO:0031404">
    <property type="term" value="F:chloride ion binding"/>
    <property type="evidence" value="ECO:0000314"/>
    <property type="project" value="UniProtKB"/>
</dbReference>
<dbReference type="GO" id="GO:0042803">
    <property type="term" value="F:protein homodimerization activity"/>
    <property type="evidence" value="ECO:0000314"/>
    <property type="project" value="UniProtKB"/>
</dbReference>
<dbReference type="GO" id="GO:0030170">
    <property type="term" value="F:pyridoxal phosphate binding"/>
    <property type="evidence" value="ECO:0000314"/>
    <property type="project" value="UniProtKB"/>
</dbReference>
<dbReference type="GO" id="GO:0008483">
    <property type="term" value="F:transaminase activity"/>
    <property type="evidence" value="ECO:0007669"/>
    <property type="project" value="TreeGrafter"/>
</dbReference>
<dbReference type="GO" id="GO:0006520">
    <property type="term" value="P:amino acid metabolic process"/>
    <property type="evidence" value="ECO:0007669"/>
    <property type="project" value="TreeGrafter"/>
</dbReference>
<dbReference type="CDD" id="cd00609">
    <property type="entry name" value="AAT_like"/>
    <property type="match status" value="1"/>
</dbReference>
<dbReference type="Gene3D" id="3.90.1150.10">
    <property type="entry name" value="Aspartate Aminotransferase, domain 1"/>
    <property type="match status" value="1"/>
</dbReference>
<dbReference type="Gene3D" id="2.10.25.30">
    <property type="entry name" value="EGF-like, alliinase"/>
    <property type="match status" value="1"/>
</dbReference>
<dbReference type="Gene3D" id="3.40.640.10">
    <property type="entry name" value="Type I PLP-dependent aspartate aminotransferase-like (Major domain)"/>
    <property type="match status" value="1"/>
</dbReference>
<dbReference type="InterPro" id="IPR006948">
    <property type="entry name" value="Alliinase_C"/>
</dbReference>
<dbReference type="InterPro" id="IPR037029">
    <property type="entry name" value="Alliinase_N_sf"/>
</dbReference>
<dbReference type="InterPro" id="IPR006947">
    <property type="entry name" value="EGF_alliinase"/>
</dbReference>
<dbReference type="InterPro" id="IPR050478">
    <property type="entry name" value="Ethylene_sulfur-biosynth"/>
</dbReference>
<dbReference type="InterPro" id="IPR015424">
    <property type="entry name" value="PyrdxlP-dep_Trfase"/>
</dbReference>
<dbReference type="InterPro" id="IPR015421">
    <property type="entry name" value="PyrdxlP-dep_Trfase_major"/>
</dbReference>
<dbReference type="InterPro" id="IPR015422">
    <property type="entry name" value="PyrdxlP-dep_Trfase_small"/>
</dbReference>
<dbReference type="PANTHER" id="PTHR43795">
    <property type="entry name" value="BIFUNCTIONAL ASPARTATE AMINOTRANSFERASE AND GLUTAMATE/ASPARTATE-PREPHENATE AMINOTRANSFERASE-RELATED"/>
    <property type="match status" value="1"/>
</dbReference>
<dbReference type="PANTHER" id="PTHR43795:SF20">
    <property type="entry name" value="TRYPTOPHAN AMINOTRANSFERASE-RELATED PROTEIN 3"/>
    <property type="match status" value="1"/>
</dbReference>
<dbReference type="Pfam" id="PF04864">
    <property type="entry name" value="Alliinase_C"/>
    <property type="match status" value="1"/>
</dbReference>
<dbReference type="Pfam" id="PF04863">
    <property type="entry name" value="EGF_alliinase"/>
    <property type="match status" value="1"/>
</dbReference>
<dbReference type="SUPFAM" id="SSF53383">
    <property type="entry name" value="PLP-dependent transferases"/>
    <property type="match status" value="1"/>
</dbReference>
<dbReference type="PROSITE" id="PS00022">
    <property type="entry name" value="EGF_1"/>
    <property type="match status" value="1"/>
</dbReference>
<reference key="1">
    <citation type="journal article" date="1992" name="Eur. J. Biochem.">
        <title>Isolation and characterization of alliinase cDNA clones from garlic (Allium sativum L.) and related species.</title>
        <authorList>
            <person name="van Damme E.J.M."/>
            <person name="Smeets K."/>
            <person name="Torrekens S."/>
            <person name="van Leuven F."/>
            <person name="Peumans W.J."/>
        </authorList>
    </citation>
    <scope>NUCLEOTIDE SEQUENCE [MRNA]</scope>
    <scope>PROTEIN SEQUENCE OF 39-58</scope>
    <source>
        <tissue>Shoot</tissue>
    </source>
</reference>
<reference key="2">
    <citation type="journal article" date="2002" name="Acta Crystallogr. D">
        <title>Alliin lyase (alliinase) from garlic (Allium sativum): crystallization and preliminary X-ray characterization.</title>
        <authorList>
            <person name="Shimon L.J."/>
            <person name="Rabinkov A."/>
            <person name="Miron T."/>
            <person name="Mirelman D."/>
            <person name="Wilchek M."/>
            <person name="Frolow F."/>
        </authorList>
    </citation>
    <scope>CATALYTIC ACTIVITY</scope>
    <scope>SUBUNIT</scope>
    <scope>TISSUE SPECIFICITY</scope>
    <scope>CRYSTALLIZATION</scope>
</reference>
<reference key="3">
    <citation type="journal article" date="2002" name="Arch. Biochem. Biophys.">
        <title>Purification, characterization, and crystallization of alliinase from garlic.</title>
        <authorList>
            <person name="Kuettner E.B."/>
            <person name="Hilgenfeld R."/>
            <person name="Weiss M.S."/>
        </authorList>
    </citation>
    <scope>CHARACTERIZATION</scope>
    <scope>CRYSTALLIZATION</scope>
    <source>
        <tissue>Bulb</tissue>
    </source>
</reference>
<reference key="4">
    <citation type="journal article" date="2002" name="J. Biol. Chem.">
        <title>The active principle of garlic at atomic resolution.</title>
        <authorList>
            <person name="Kuettner E.B."/>
            <person name="Hilgenfeld R."/>
            <person name="Weiss M.S."/>
        </authorList>
    </citation>
    <scope>X-RAY CRYSTALLOGRAPHY (1.53 ANGSTROMS) OF 39-465 IN COMPLEX WITH PYRIDOXAL PHOSPHATE AND CHLORIDE</scope>
    <scope>COFACTOR</scope>
    <scope>SUBUNIT</scope>
    <scope>TISSUE SPECIFICITY</scope>
    <scope>GLYCOSYLATION AT ASN-184 AND ASN-366</scope>
    <scope>DISULFIDE BONDS</scope>
    <source>
        <tissue>Bulb</tissue>
    </source>
</reference>
<reference evidence="9 10" key="5">
    <citation type="journal article" date="2007" name="J. Mol. Biol.">
        <title>Two structures of alliinase from Alliium sativum L.: apo form and ternary complex with aminoacrylate reaction intermediate covalently bound to the PLP cofactor.</title>
        <authorList>
            <person name="Shimon L.J."/>
            <person name="Rabinkov A."/>
            <person name="Shin I."/>
            <person name="Miron T."/>
            <person name="Mirelman D."/>
            <person name="Wilchek M."/>
            <person name="Frolow F."/>
        </authorList>
    </citation>
    <scope>X-RAY CRYSTALLOGRAPHY (1.4 ANGSTROMS) OF 39-465 OF APO- AND HOLOENZYME IN COMPLEX WITH CHLORIDE</scope>
    <scope>COFACTOR</scope>
    <scope>SUBUNIT</scope>
    <scope>TISSUE SPECIFICITY</scope>
    <scope>GLYCOSYLATION AT ASN-184; ASN-229 AND ASN-366</scope>
    <scope>DISULFIDE BONDS</scope>
    <scope>REACTION MECHANISM</scope>
</reference>